<evidence type="ECO:0000255" key="1">
    <source>
        <dbReference type="HAMAP-Rule" id="MF_00198"/>
    </source>
</evidence>
<organism>
    <name type="scientific">Escherichia coli O17:K52:H18 (strain UMN026 / ExPEC)</name>
    <dbReference type="NCBI Taxonomy" id="585056"/>
    <lineage>
        <taxon>Bacteria</taxon>
        <taxon>Pseudomonadati</taxon>
        <taxon>Pseudomonadota</taxon>
        <taxon>Gammaproteobacteria</taxon>
        <taxon>Enterobacterales</taxon>
        <taxon>Enterobacteriaceae</taxon>
        <taxon>Escherichia</taxon>
    </lineage>
</organism>
<accession>B7N7Z1</accession>
<name>SPEE_ECOLU</name>
<feature type="chain" id="PRO_1000197470" description="Polyamine aminopropyltransferase">
    <location>
        <begin position="1"/>
        <end position="288"/>
    </location>
</feature>
<feature type="domain" description="PABS" evidence="1">
    <location>
        <begin position="9"/>
        <end position="238"/>
    </location>
</feature>
<feature type="active site" description="Proton acceptor" evidence="1">
    <location>
        <position position="158"/>
    </location>
</feature>
<feature type="binding site" evidence="1">
    <location>
        <position position="33"/>
    </location>
    <ligand>
        <name>S-methyl-5'-thioadenosine</name>
        <dbReference type="ChEBI" id="CHEBI:17509"/>
    </ligand>
</feature>
<feature type="binding site" evidence="1">
    <location>
        <position position="64"/>
    </location>
    <ligand>
        <name>spermidine</name>
        <dbReference type="ChEBI" id="CHEBI:57834"/>
    </ligand>
</feature>
<feature type="binding site" evidence="1">
    <location>
        <position position="88"/>
    </location>
    <ligand>
        <name>spermidine</name>
        <dbReference type="ChEBI" id="CHEBI:57834"/>
    </ligand>
</feature>
<feature type="binding site" evidence="1">
    <location>
        <position position="108"/>
    </location>
    <ligand>
        <name>S-methyl-5'-thioadenosine</name>
        <dbReference type="ChEBI" id="CHEBI:17509"/>
    </ligand>
</feature>
<feature type="binding site" evidence="1">
    <location>
        <begin position="140"/>
        <end position="141"/>
    </location>
    <ligand>
        <name>S-methyl-5'-thioadenosine</name>
        <dbReference type="ChEBI" id="CHEBI:17509"/>
    </ligand>
</feature>
<feature type="binding site" evidence="1">
    <location>
        <begin position="158"/>
        <end position="161"/>
    </location>
    <ligand>
        <name>spermidine</name>
        <dbReference type="ChEBI" id="CHEBI:57834"/>
    </ligand>
</feature>
<feature type="binding site" evidence="1">
    <location>
        <position position="165"/>
    </location>
    <ligand>
        <name>S-methyl-5'-thioadenosine</name>
        <dbReference type="ChEBI" id="CHEBI:17509"/>
    </ligand>
</feature>
<protein>
    <recommendedName>
        <fullName evidence="1">Polyamine aminopropyltransferase</fullName>
    </recommendedName>
    <alternativeName>
        <fullName evidence="1">Putrescine aminopropyltransferase</fullName>
        <shortName evidence="1">PAPT</shortName>
    </alternativeName>
    <alternativeName>
        <fullName evidence="1">Spermidine synthase</fullName>
        <shortName evidence="1">SPDS</shortName>
        <shortName evidence="1">SPDSY</shortName>
        <ecNumber evidence="1">2.5.1.16</ecNumber>
    </alternativeName>
</protein>
<comment type="function">
    <text evidence="1">Catalyzes the irreversible transfer of a propylamine group from the amino donor S-adenosylmethioninamine (decarboxy-AdoMet) to putrescine (1,4-diaminobutane) to yield spermidine.</text>
</comment>
<comment type="catalytic activity">
    <reaction evidence="1">
        <text>S-adenosyl 3-(methylsulfanyl)propylamine + putrescine = S-methyl-5'-thioadenosine + spermidine + H(+)</text>
        <dbReference type="Rhea" id="RHEA:12721"/>
        <dbReference type="ChEBI" id="CHEBI:15378"/>
        <dbReference type="ChEBI" id="CHEBI:17509"/>
        <dbReference type="ChEBI" id="CHEBI:57443"/>
        <dbReference type="ChEBI" id="CHEBI:57834"/>
        <dbReference type="ChEBI" id="CHEBI:326268"/>
        <dbReference type="EC" id="2.5.1.16"/>
    </reaction>
</comment>
<comment type="pathway">
    <text evidence="1">Amine and polyamine biosynthesis; spermidine biosynthesis; spermidine from putrescine: step 1/1.</text>
</comment>
<comment type="subunit">
    <text evidence="1">Homodimer or homotetramer.</text>
</comment>
<comment type="subcellular location">
    <subcellularLocation>
        <location evidence="1">Cytoplasm</location>
    </subcellularLocation>
</comment>
<comment type="similarity">
    <text evidence="1">Belongs to the spermidine/spermine synthase family.</text>
</comment>
<reference key="1">
    <citation type="journal article" date="2009" name="PLoS Genet.">
        <title>Organised genome dynamics in the Escherichia coli species results in highly diverse adaptive paths.</title>
        <authorList>
            <person name="Touchon M."/>
            <person name="Hoede C."/>
            <person name="Tenaillon O."/>
            <person name="Barbe V."/>
            <person name="Baeriswyl S."/>
            <person name="Bidet P."/>
            <person name="Bingen E."/>
            <person name="Bonacorsi S."/>
            <person name="Bouchier C."/>
            <person name="Bouvet O."/>
            <person name="Calteau A."/>
            <person name="Chiapello H."/>
            <person name="Clermont O."/>
            <person name="Cruveiller S."/>
            <person name="Danchin A."/>
            <person name="Diard M."/>
            <person name="Dossat C."/>
            <person name="Karoui M.E."/>
            <person name="Frapy E."/>
            <person name="Garry L."/>
            <person name="Ghigo J.M."/>
            <person name="Gilles A.M."/>
            <person name="Johnson J."/>
            <person name="Le Bouguenec C."/>
            <person name="Lescat M."/>
            <person name="Mangenot S."/>
            <person name="Martinez-Jehanne V."/>
            <person name="Matic I."/>
            <person name="Nassif X."/>
            <person name="Oztas S."/>
            <person name="Petit M.A."/>
            <person name="Pichon C."/>
            <person name="Rouy Z."/>
            <person name="Ruf C.S."/>
            <person name="Schneider D."/>
            <person name="Tourret J."/>
            <person name="Vacherie B."/>
            <person name="Vallenet D."/>
            <person name="Medigue C."/>
            <person name="Rocha E.P.C."/>
            <person name="Denamur E."/>
        </authorList>
    </citation>
    <scope>NUCLEOTIDE SEQUENCE [LARGE SCALE GENOMIC DNA]</scope>
    <source>
        <strain>UMN026 / ExPEC</strain>
    </source>
</reference>
<proteinExistence type="inferred from homology"/>
<sequence>MAEKKQWHETLHDQFGQYFAVDNVLYHEKTDHQDLIIFENAAFGRVMALDGVVQTTERDEFIYHEMMTHVPLLAHGHAKHVLIIGGGDGAMLREVTRHKNVESITMVEIDAGVVSFCRQYLPNHNAGSYDDPRFKLVIDDGVNFVNQTSQTFDVIISDCTDPIGPGESLFTSAFYEGCKRCLNPGGIFVAQNGVCFLQQEEAIDSHRKLSHYFSDVGFYQAAIPTYYGGIMTFAWATDNDALRHLSTEIIQARFLASGLKCRYYNPAVHTAAFALPQYLQDALASQPS</sequence>
<dbReference type="EC" id="2.5.1.16" evidence="1"/>
<dbReference type="EMBL" id="CU928163">
    <property type="protein sequence ID" value="CAR11341.1"/>
    <property type="molecule type" value="Genomic_DNA"/>
</dbReference>
<dbReference type="RefSeq" id="WP_000818414.1">
    <property type="nucleotide sequence ID" value="NC_011751.1"/>
</dbReference>
<dbReference type="RefSeq" id="YP_002410897.1">
    <property type="nucleotide sequence ID" value="NC_011751.1"/>
</dbReference>
<dbReference type="SMR" id="B7N7Z1"/>
<dbReference type="STRING" id="585056.ECUMN_0118"/>
<dbReference type="KEGG" id="eum:ECUMN_0118"/>
<dbReference type="PATRIC" id="fig|585056.7.peg.310"/>
<dbReference type="HOGENOM" id="CLU_048199_0_0_6"/>
<dbReference type="UniPathway" id="UPA00248">
    <property type="reaction ID" value="UER00314"/>
</dbReference>
<dbReference type="Proteomes" id="UP000007097">
    <property type="component" value="Chromosome"/>
</dbReference>
<dbReference type="GO" id="GO:0005829">
    <property type="term" value="C:cytosol"/>
    <property type="evidence" value="ECO:0007669"/>
    <property type="project" value="TreeGrafter"/>
</dbReference>
<dbReference type="GO" id="GO:0004766">
    <property type="term" value="F:spermidine synthase activity"/>
    <property type="evidence" value="ECO:0007669"/>
    <property type="project" value="UniProtKB-UniRule"/>
</dbReference>
<dbReference type="GO" id="GO:0008295">
    <property type="term" value="P:spermidine biosynthetic process"/>
    <property type="evidence" value="ECO:0007669"/>
    <property type="project" value="UniProtKB-UniRule"/>
</dbReference>
<dbReference type="CDD" id="cd02440">
    <property type="entry name" value="AdoMet_MTases"/>
    <property type="match status" value="1"/>
</dbReference>
<dbReference type="FunFam" id="2.30.140.10:FF:000002">
    <property type="entry name" value="Polyamine aminopropyltransferase"/>
    <property type="match status" value="1"/>
</dbReference>
<dbReference type="FunFam" id="3.40.50.150:FF:000026">
    <property type="entry name" value="Polyamine aminopropyltransferase"/>
    <property type="match status" value="1"/>
</dbReference>
<dbReference type="Gene3D" id="2.30.140.10">
    <property type="entry name" value="Spermidine synthase, tetramerisation domain"/>
    <property type="match status" value="1"/>
</dbReference>
<dbReference type="Gene3D" id="3.40.50.150">
    <property type="entry name" value="Vaccinia Virus protein VP39"/>
    <property type="match status" value="1"/>
</dbReference>
<dbReference type="HAMAP" id="MF_00198">
    <property type="entry name" value="Spermidine_synth"/>
    <property type="match status" value="1"/>
</dbReference>
<dbReference type="InterPro" id="IPR030374">
    <property type="entry name" value="PABS"/>
</dbReference>
<dbReference type="InterPro" id="IPR030373">
    <property type="entry name" value="PABS_CS"/>
</dbReference>
<dbReference type="InterPro" id="IPR029063">
    <property type="entry name" value="SAM-dependent_MTases_sf"/>
</dbReference>
<dbReference type="InterPro" id="IPR001045">
    <property type="entry name" value="Spermi_synthase"/>
</dbReference>
<dbReference type="InterPro" id="IPR035246">
    <property type="entry name" value="Spermidine_synt_N"/>
</dbReference>
<dbReference type="InterPro" id="IPR037163">
    <property type="entry name" value="Spermidine_synt_N_sf"/>
</dbReference>
<dbReference type="NCBIfam" id="NF037959">
    <property type="entry name" value="MFS_SpdSyn"/>
    <property type="match status" value="1"/>
</dbReference>
<dbReference type="NCBIfam" id="NF002010">
    <property type="entry name" value="PRK00811.1"/>
    <property type="match status" value="1"/>
</dbReference>
<dbReference type="NCBIfam" id="TIGR00417">
    <property type="entry name" value="speE"/>
    <property type="match status" value="1"/>
</dbReference>
<dbReference type="PANTHER" id="PTHR11558:SF11">
    <property type="entry name" value="SPERMIDINE SYNTHASE"/>
    <property type="match status" value="1"/>
</dbReference>
<dbReference type="PANTHER" id="PTHR11558">
    <property type="entry name" value="SPERMIDINE/SPERMINE SYNTHASE"/>
    <property type="match status" value="1"/>
</dbReference>
<dbReference type="Pfam" id="PF17284">
    <property type="entry name" value="Spermine_synt_N"/>
    <property type="match status" value="1"/>
</dbReference>
<dbReference type="Pfam" id="PF01564">
    <property type="entry name" value="Spermine_synth"/>
    <property type="match status" value="1"/>
</dbReference>
<dbReference type="SUPFAM" id="SSF53335">
    <property type="entry name" value="S-adenosyl-L-methionine-dependent methyltransferases"/>
    <property type="match status" value="1"/>
</dbReference>
<dbReference type="PROSITE" id="PS01330">
    <property type="entry name" value="PABS_1"/>
    <property type="match status" value="1"/>
</dbReference>
<dbReference type="PROSITE" id="PS51006">
    <property type="entry name" value="PABS_2"/>
    <property type="match status" value="1"/>
</dbReference>
<gene>
    <name evidence="1" type="primary">speE</name>
    <name type="ordered locus">ECUMN_0118</name>
</gene>
<keyword id="KW-0963">Cytoplasm</keyword>
<keyword id="KW-0620">Polyamine biosynthesis</keyword>
<keyword id="KW-0745">Spermidine biosynthesis</keyword>
<keyword id="KW-0808">Transferase</keyword>